<reference key="1">
    <citation type="journal article" date="1995" name="Mol. Mar. Biol. Biotechnol.">
        <title>Nuclear genes from the copepod Calanus finmarchicus.</title>
        <authorList>
            <person name="Crawford D.L."/>
        </authorList>
    </citation>
    <scope>NUCLEOTIDE SEQUENCE [MRNA]</scope>
</reference>
<comment type="catalytic activity">
    <reaction evidence="1">
        <text>alpha-D-glucose 6-phosphate = beta-D-fructose 6-phosphate</text>
        <dbReference type="Rhea" id="RHEA:11816"/>
        <dbReference type="ChEBI" id="CHEBI:57634"/>
        <dbReference type="ChEBI" id="CHEBI:58225"/>
        <dbReference type="EC" id="5.3.1.9"/>
    </reaction>
</comment>
<comment type="pathway">
    <text evidence="1">Carbohydrate degradation; glycolysis; D-glyceraldehyde 3-phosphate and glycerone phosphate from D-glucose: step 2/4.</text>
</comment>
<comment type="subcellular location">
    <subcellularLocation>
        <location>Cytoplasm</location>
    </subcellularLocation>
</comment>
<comment type="similarity">
    <text evidence="1">Belongs to the GPI family.</text>
</comment>
<dbReference type="EC" id="5.3.1.9"/>
<dbReference type="EMBL" id="U21239">
    <property type="protein sequence ID" value="AAA85286.1"/>
    <property type="molecule type" value="mRNA"/>
</dbReference>
<dbReference type="SMR" id="P46479"/>
<dbReference type="UniPathway" id="UPA00109">
    <property type="reaction ID" value="UER00181"/>
</dbReference>
<dbReference type="GO" id="GO:0005829">
    <property type="term" value="C:cytosol"/>
    <property type="evidence" value="ECO:0007669"/>
    <property type="project" value="TreeGrafter"/>
</dbReference>
<dbReference type="GO" id="GO:0097367">
    <property type="term" value="F:carbohydrate derivative binding"/>
    <property type="evidence" value="ECO:0007669"/>
    <property type="project" value="InterPro"/>
</dbReference>
<dbReference type="GO" id="GO:0004347">
    <property type="term" value="F:glucose-6-phosphate isomerase activity"/>
    <property type="evidence" value="ECO:0000250"/>
    <property type="project" value="UniProtKB"/>
</dbReference>
<dbReference type="GO" id="GO:0048029">
    <property type="term" value="F:monosaccharide binding"/>
    <property type="evidence" value="ECO:0007669"/>
    <property type="project" value="TreeGrafter"/>
</dbReference>
<dbReference type="GO" id="GO:0006094">
    <property type="term" value="P:gluconeogenesis"/>
    <property type="evidence" value="ECO:0007669"/>
    <property type="project" value="UniProtKB-KW"/>
</dbReference>
<dbReference type="GO" id="GO:0051156">
    <property type="term" value="P:glucose 6-phosphate metabolic process"/>
    <property type="evidence" value="ECO:0000250"/>
    <property type="project" value="UniProtKB"/>
</dbReference>
<dbReference type="GO" id="GO:0006096">
    <property type="term" value="P:glycolytic process"/>
    <property type="evidence" value="ECO:0007669"/>
    <property type="project" value="UniProtKB-UniPathway"/>
</dbReference>
<dbReference type="CDD" id="cd05016">
    <property type="entry name" value="SIS_PGI_2"/>
    <property type="match status" value="1"/>
</dbReference>
<dbReference type="FunFam" id="3.40.50.10490:FF:000039">
    <property type="entry name" value="Glucose-6-phosphate isomerase"/>
    <property type="match status" value="1"/>
</dbReference>
<dbReference type="Gene3D" id="3.40.50.10490">
    <property type="entry name" value="Glucose-6-phosphate isomerase like protein, domain 1"/>
    <property type="match status" value="2"/>
</dbReference>
<dbReference type="InterPro" id="IPR001672">
    <property type="entry name" value="G6P_Isomerase"/>
</dbReference>
<dbReference type="InterPro" id="IPR018189">
    <property type="entry name" value="Phosphoglucose_isomerase_CS"/>
</dbReference>
<dbReference type="InterPro" id="IPR046348">
    <property type="entry name" value="SIS_dom_sf"/>
</dbReference>
<dbReference type="InterPro" id="IPR035482">
    <property type="entry name" value="SIS_PGI_2"/>
</dbReference>
<dbReference type="PANTHER" id="PTHR11469">
    <property type="entry name" value="GLUCOSE-6-PHOSPHATE ISOMERASE"/>
    <property type="match status" value="1"/>
</dbReference>
<dbReference type="PANTHER" id="PTHR11469:SF1">
    <property type="entry name" value="GLUCOSE-6-PHOSPHATE ISOMERASE"/>
    <property type="match status" value="1"/>
</dbReference>
<dbReference type="Pfam" id="PF00342">
    <property type="entry name" value="PGI"/>
    <property type="match status" value="1"/>
</dbReference>
<dbReference type="PRINTS" id="PR00662">
    <property type="entry name" value="G6PISOMERASE"/>
</dbReference>
<dbReference type="SUPFAM" id="SSF53697">
    <property type="entry name" value="SIS domain"/>
    <property type="match status" value="1"/>
</dbReference>
<dbReference type="PROSITE" id="PS00765">
    <property type="entry name" value="P_GLUCOSE_ISOMERASE_1"/>
    <property type="match status" value="1"/>
</dbReference>
<dbReference type="PROSITE" id="PS51463">
    <property type="entry name" value="P_GLUCOSE_ISOMERASE_3"/>
    <property type="match status" value="1"/>
</dbReference>
<organism>
    <name type="scientific">Calanus finmarchicus</name>
    <name type="common">Calanus tonsus</name>
    <dbReference type="NCBI Taxonomy" id="6837"/>
    <lineage>
        <taxon>Eukaryota</taxon>
        <taxon>Metazoa</taxon>
        <taxon>Ecdysozoa</taxon>
        <taxon>Arthropoda</taxon>
        <taxon>Crustacea</taxon>
        <taxon>Multicrustacea</taxon>
        <taxon>Hexanauplia</taxon>
        <taxon>Copepoda</taxon>
        <taxon>Calanoida</taxon>
        <taxon>Calanidae</taxon>
        <taxon>Calanus</taxon>
    </lineage>
</organism>
<proteinExistence type="evidence at transcript level"/>
<accession>P46479</accession>
<evidence type="ECO:0000255" key="1">
    <source>
        <dbReference type="PROSITE-ProRule" id="PRU00796"/>
    </source>
</evidence>
<protein>
    <recommendedName>
        <fullName>Glucose-6-phosphate isomerase</fullName>
        <shortName>GPI</shortName>
        <ecNumber>5.3.1.9</ecNumber>
    </recommendedName>
    <alternativeName>
        <fullName>Phosphoglucose isomerase</fullName>
        <shortName>PGI</shortName>
    </alternativeName>
    <alternativeName>
        <fullName>Phosphohexose isomerase</fullName>
        <shortName>PHI</shortName>
    </alternativeName>
</protein>
<name>G6PI_CALFI</name>
<gene>
    <name type="primary">PGI</name>
</gene>
<sequence length="304" mass="34460">FTTQETITNANTAKQWFLKSAKDSKFVANHFVALSTNAKLVQEFGIDKANMFEFWDWVGGRYSLWSAIGMSIALNIGFENFEHLLSGAHWMDNHFKSTPIERNIPVILAVLGIWYGNFYGAETQALLPYDQYMHRFAAYFQQGDMESNGKYVVRAGDKVNYSTGPIVWGEPGTNGQHAFYQLIHQVPHHPCDFNSPVKSHNSELRDGLHHTILLSNFLAQTEALMKGKDRQTVEKELKAAGKSEDEIKSIGPHKEFTGNRPTNSIMVDTVTPFTLGAMIAMYEHKIFTQGIIWDINSYDQWGVE</sequence>
<feature type="chain" id="PRO_0000180542" description="Glucose-6-phosphate isomerase">
    <location>
        <begin position="1" status="less than"/>
        <end position="304" status="greater than"/>
    </location>
</feature>
<feature type="active site" description="Proton donor" evidence="1">
    <location>
        <position position="146"/>
    </location>
</feature>
<feature type="active site" evidence="1">
    <location>
        <position position="177"/>
    </location>
</feature>
<feature type="non-terminal residue">
    <location>
        <position position="1"/>
    </location>
</feature>
<feature type="non-terminal residue">
    <location>
        <position position="304"/>
    </location>
</feature>
<keyword id="KW-0963">Cytoplasm</keyword>
<keyword id="KW-0312">Gluconeogenesis</keyword>
<keyword id="KW-0324">Glycolysis</keyword>
<keyword id="KW-0413">Isomerase</keyword>